<proteinExistence type="inferred from homology"/>
<name>RRF_SALHS</name>
<keyword id="KW-0963">Cytoplasm</keyword>
<keyword id="KW-0648">Protein biosynthesis</keyword>
<protein>
    <recommendedName>
        <fullName evidence="1">Ribosome-recycling factor</fullName>
        <shortName evidence="1">RRF</shortName>
    </recommendedName>
    <alternativeName>
        <fullName evidence="1">Ribosome-releasing factor</fullName>
    </alternativeName>
</protein>
<accession>B4TK47</accession>
<dbReference type="EMBL" id="CP001120">
    <property type="protein sequence ID" value="ACF69213.1"/>
    <property type="molecule type" value="Genomic_DNA"/>
</dbReference>
<dbReference type="RefSeq" id="WP_000622423.1">
    <property type="nucleotide sequence ID" value="NC_011083.1"/>
</dbReference>
<dbReference type="SMR" id="B4TK47"/>
<dbReference type="KEGG" id="seh:SeHA_C0257"/>
<dbReference type="HOGENOM" id="CLU_073981_2_1_6"/>
<dbReference type="Proteomes" id="UP000001866">
    <property type="component" value="Chromosome"/>
</dbReference>
<dbReference type="GO" id="GO:0005829">
    <property type="term" value="C:cytosol"/>
    <property type="evidence" value="ECO:0007669"/>
    <property type="project" value="GOC"/>
</dbReference>
<dbReference type="GO" id="GO:0043023">
    <property type="term" value="F:ribosomal large subunit binding"/>
    <property type="evidence" value="ECO:0007669"/>
    <property type="project" value="TreeGrafter"/>
</dbReference>
<dbReference type="GO" id="GO:0002184">
    <property type="term" value="P:cytoplasmic translational termination"/>
    <property type="evidence" value="ECO:0007669"/>
    <property type="project" value="TreeGrafter"/>
</dbReference>
<dbReference type="CDD" id="cd00520">
    <property type="entry name" value="RRF"/>
    <property type="match status" value="1"/>
</dbReference>
<dbReference type="FunFam" id="1.10.132.20:FF:000001">
    <property type="entry name" value="Ribosome-recycling factor"/>
    <property type="match status" value="1"/>
</dbReference>
<dbReference type="FunFam" id="3.30.1360.40:FF:000001">
    <property type="entry name" value="Ribosome-recycling factor"/>
    <property type="match status" value="1"/>
</dbReference>
<dbReference type="Gene3D" id="3.30.1360.40">
    <property type="match status" value="1"/>
</dbReference>
<dbReference type="Gene3D" id="1.10.132.20">
    <property type="entry name" value="Ribosome-recycling factor"/>
    <property type="match status" value="1"/>
</dbReference>
<dbReference type="HAMAP" id="MF_00040">
    <property type="entry name" value="RRF"/>
    <property type="match status" value="1"/>
</dbReference>
<dbReference type="InterPro" id="IPR002661">
    <property type="entry name" value="Ribosome_recyc_fac"/>
</dbReference>
<dbReference type="InterPro" id="IPR023584">
    <property type="entry name" value="Ribosome_recyc_fac_dom"/>
</dbReference>
<dbReference type="InterPro" id="IPR036191">
    <property type="entry name" value="RRF_sf"/>
</dbReference>
<dbReference type="NCBIfam" id="TIGR00496">
    <property type="entry name" value="frr"/>
    <property type="match status" value="1"/>
</dbReference>
<dbReference type="PANTHER" id="PTHR20982:SF3">
    <property type="entry name" value="MITOCHONDRIAL RIBOSOME RECYCLING FACTOR PSEUDO 1"/>
    <property type="match status" value="1"/>
</dbReference>
<dbReference type="PANTHER" id="PTHR20982">
    <property type="entry name" value="RIBOSOME RECYCLING FACTOR"/>
    <property type="match status" value="1"/>
</dbReference>
<dbReference type="Pfam" id="PF01765">
    <property type="entry name" value="RRF"/>
    <property type="match status" value="1"/>
</dbReference>
<dbReference type="SUPFAM" id="SSF55194">
    <property type="entry name" value="Ribosome recycling factor, RRF"/>
    <property type="match status" value="1"/>
</dbReference>
<comment type="function">
    <text evidence="1">Responsible for the release of ribosomes from messenger RNA at the termination of protein biosynthesis. May increase the efficiency of translation by recycling ribosomes from one round of translation to another.</text>
</comment>
<comment type="subcellular location">
    <subcellularLocation>
        <location evidence="1">Cytoplasm</location>
    </subcellularLocation>
</comment>
<comment type="similarity">
    <text evidence="1">Belongs to the RRF family.</text>
</comment>
<feature type="chain" id="PRO_1000090782" description="Ribosome-recycling factor">
    <location>
        <begin position="1"/>
        <end position="185"/>
    </location>
</feature>
<reference key="1">
    <citation type="journal article" date="2011" name="J. Bacteriol.">
        <title>Comparative genomics of 28 Salmonella enterica isolates: evidence for CRISPR-mediated adaptive sublineage evolution.</title>
        <authorList>
            <person name="Fricke W.F."/>
            <person name="Mammel M.K."/>
            <person name="McDermott P.F."/>
            <person name="Tartera C."/>
            <person name="White D.G."/>
            <person name="Leclerc J.E."/>
            <person name="Ravel J."/>
            <person name="Cebula T.A."/>
        </authorList>
    </citation>
    <scope>NUCLEOTIDE SEQUENCE [LARGE SCALE GENOMIC DNA]</scope>
    <source>
        <strain>SL476</strain>
    </source>
</reference>
<sequence>MISDIRKDAEVRMEKCVEAFKTQISKVRTGRASPSLLDGIVVEYYGTPTPLRQLASVTVEDSRTLKINVFDRSMGPAVEKAIMASDLGLNPSSAGTDIRVPLPPLTEERRKDLTKIVRGEAEQARVAVRNVRRDANDKVKALLKDKAISEDDDRRSQEEVQKMTDAAIKKVDAALADKEAELMQF</sequence>
<organism>
    <name type="scientific">Salmonella heidelberg (strain SL476)</name>
    <dbReference type="NCBI Taxonomy" id="454169"/>
    <lineage>
        <taxon>Bacteria</taxon>
        <taxon>Pseudomonadati</taxon>
        <taxon>Pseudomonadota</taxon>
        <taxon>Gammaproteobacteria</taxon>
        <taxon>Enterobacterales</taxon>
        <taxon>Enterobacteriaceae</taxon>
        <taxon>Salmonella</taxon>
    </lineage>
</organism>
<evidence type="ECO:0000255" key="1">
    <source>
        <dbReference type="HAMAP-Rule" id="MF_00040"/>
    </source>
</evidence>
<gene>
    <name evidence="1" type="primary">frr</name>
    <name type="ordered locus">SeHA_C0257</name>
</gene>